<evidence type="ECO:0000255" key="1">
    <source>
        <dbReference type="HAMAP-Rule" id="MF_00344"/>
    </source>
</evidence>
<feature type="chain" id="PRO_1000120335" description="GMP synthase [glutamine-hydrolyzing]">
    <location>
        <begin position="1"/>
        <end position="526"/>
    </location>
</feature>
<feature type="domain" description="Glutamine amidotransferase type-1" evidence="1">
    <location>
        <begin position="4"/>
        <end position="202"/>
    </location>
</feature>
<feature type="domain" description="GMPS ATP-PPase" evidence="1">
    <location>
        <begin position="203"/>
        <end position="395"/>
    </location>
</feature>
<feature type="active site" description="Nucleophile" evidence="1">
    <location>
        <position position="81"/>
    </location>
</feature>
<feature type="active site" evidence="1">
    <location>
        <position position="176"/>
    </location>
</feature>
<feature type="active site" evidence="1">
    <location>
        <position position="178"/>
    </location>
</feature>
<feature type="binding site" evidence="1">
    <location>
        <begin position="230"/>
        <end position="236"/>
    </location>
    <ligand>
        <name>ATP</name>
        <dbReference type="ChEBI" id="CHEBI:30616"/>
    </ligand>
</feature>
<sequence>MQQKILILDFGSQYTQLIARRIREANVYCELHSWDVSDAFIREFNPAGVILSGGPNSVYEDETPRAPQSVFELGVPVLGICYGMQTMAAQLGGSVENAAKREFGYAEIRAQGHSALLKGIQDKSNAEGHGLLDVWMSHGDKVTALPEGFKIIASNSATPIAGMADENRRFYAVQFHPEVTHTKQGKALLNRFVHDICGCDQSWNMPDYVETAVQRIREEVGCDEVILGLSGGVDSSVAAALIHRAIGDQLTCVFVDNGLLRLNEAEQVMETFGKNLGVKVIHVDASAKFLGDLSGVNDPEAKRKIIGREFVEVFQQEAAKLPQAKWLAQGTIYPDVIESAGAKTKKAHTIKSHHNVGGLPDTLKLKLLEPLRELFKDEVRELGIALGLPHDMVYRHPFPGPGLGVRILGEVKREYADLLRQADHIFIEELRSTKDADGKSWYDKTSQAFAVFLPVKSVGVMGDGRTYDYVVALRAVVTTDFMTAHWAELPYDLLGKVSNRIINEVRGINRVVYDISGKPPATIEWE</sequence>
<comment type="function">
    <text evidence="1">Catalyzes the synthesis of GMP from XMP.</text>
</comment>
<comment type="catalytic activity">
    <reaction evidence="1">
        <text>XMP + L-glutamine + ATP + H2O = GMP + L-glutamate + AMP + diphosphate + 2 H(+)</text>
        <dbReference type="Rhea" id="RHEA:11680"/>
        <dbReference type="ChEBI" id="CHEBI:15377"/>
        <dbReference type="ChEBI" id="CHEBI:15378"/>
        <dbReference type="ChEBI" id="CHEBI:29985"/>
        <dbReference type="ChEBI" id="CHEBI:30616"/>
        <dbReference type="ChEBI" id="CHEBI:33019"/>
        <dbReference type="ChEBI" id="CHEBI:57464"/>
        <dbReference type="ChEBI" id="CHEBI:58115"/>
        <dbReference type="ChEBI" id="CHEBI:58359"/>
        <dbReference type="ChEBI" id="CHEBI:456215"/>
        <dbReference type="EC" id="6.3.5.2"/>
    </reaction>
</comment>
<comment type="pathway">
    <text evidence="1">Purine metabolism; GMP biosynthesis; GMP from XMP (L-Gln route): step 1/1.</text>
</comment>
<comment type="subunit">
    <text evidence="1">Homodimer.</text>
</comment>
<gene>
    <name evidence="1" type="primary">guaA</name>
    <name type="ordered locus">Mfla_1139</name>
</gene>
<protein>
    <recommendedName>
        <fullName evidence="1">GMP synthase [glutamine-hydrolyzing]</fullName>
        <ecNumber evidence="1">6.3.5.2</ecNumber>
    </recommendedName>
    <alternativeName>
        <fullName evidence="1">GMP synthetase</fullName>
    </alternativeName>
    <alternativeName>
        <fullName evidence="1">Glutamine amidotransferase</fullName>
    </alternativeName>
</protein>
<keyword id="KW-0067">ATP-binding</keyword>
<keyword id="KW-0315">Glutamine amidotransferase</keyword>
<keyword id="KW-0332">GMP biosynthesis</keyword>
<keyword id="KW-0436">Ligase</keyword>
<keyword id="KW-0547">Nucleotide-binding</keyword>
<keyword id="KW-0658">Purine biosynthesis</keyword>
<keyword id="KW-1185">Reference proteome</keyword>
<organism>
    <name type="scientific">Methylobacillus flagellatus (strain ATCC 51484 / DSM 6875 / VKM B-1610 / KT)</name>
    <dbReference type="NCBI Taxonomy" id="265072"/>
    <lineage>
        <taxon>Bacteria</taxon>
        <taxon>Pseudomonadati</taxon>
        <taxon>Pseudomonadota</taxon>
        <taxon>Betaproteobacteria</taxon>
        <taxon>Nitrosomonadales</taxon>
        <taxon>Methylophilaceae</taxon>
        <taxon>Methylobacillus</taxon>
    </lineage>
</organism>
<accession>Q1H280</accession>
<reference key="1">
    <citation type="submission" date="2006-03" db="EMBL/GenBank/DDBJ databases">
        <title>Complete sequence of Methylobacillus flagellatus KT.</title>
        <authorList>
            <consortium name="US DOE Joint Genome Institute"/>
            <person name="Copeland A."/>
            <person name="Lucas S."/>
            <person name="Lapidus A."/>
            <person name="Barry K."/>
            <person name="Detter J.C."/>
            <person name="Glavina del Rio T."/>
            <person name="Hammon N."/>
            <person name="Israni S."/>
            <person name="Dalin E."/>
            <person name="Tice H."/>
            <person name="Pitluck S."/>
            <person name="Brettin T."/>
            <person name="Bruce D."/>
            <person name="Han C."/>
            <person name="Tapia R."/>
            <person name="Saunders E."/>
            <person name="Gilna P."/>
            <person name="Schmutz J."/>
            <person name="Larimer F."/>
            <person name="Land M."/>
            <person name="Kyrpides N."/>
            <person name="Anderson I."/>
            <person name="Richardson P."/>
        </authorList>
    </citation>
    <scope>NUCLEOTIDE SEQUENCE [LARGE SCALE GENOMIC DNA]</scope>
    <source>
        <strain>ATCC 51484 / DSM 6875 / VKM B-1610 / KT</strain>
    </source>
</reference>
<dbReference type="EC" id="6.3.5.2" evidence="1"/>
<dbReference type="EMBL" id="CP000284">
    <property type="protein sequence ID" value="ABE49407.1"/>
    <property type="molecule type" value="Genomic_DNA"/>
</dbReference>
<dbReference type="RefSeq" id="WP_011479361.1">
    <property type="nucleotide sequence ID" value="NC_007947.1"/>
</dbReference>
<dbReference type="SMR" id="Q1H280"/>
<dbReference type="STRING" id="265072.Mfla_1139"/>
<dbReference type="MEROPS" id="C26.A07"/>
<dbReference type="KEGG" id="mfa:Mfla_1139"/>
<dbReference type="eggNOG" id="COG0518">
    <property type="taxonomic scope" value="Bacteria"/>
</dbReference>
<dbReference type="eggNOG" id="COG0519">
    <property type="taxonomic scope" value="Bacteria"/>
</dbReference>
<dbReference type="HOGENOM" id="CLU_014340_0_5_4"/>
<dbReference type="OrthoDB" id="9802219at2"/>
<dbReference type="UniPathway" id="UPA00189">
    <property type="reaction ID" value="UER00296"/>
</dbReference>
<dbReference type="Proteomes" id="UP000002440">
    <property type="component" value="Chromosome"/>
</dbReference>
<dbReference type="GO" id="GO:0005829">
    <property type="term" value="C:cytosol"/>
    <property type="evidence" value="ECO:0007669"/>
    <property type="project" value="TreeGrafter"/>
</dbReference>
<dbReference type="GO" id="GO:0005524">
    <property type="term" value="F:ATP binding"/>
    <property type="evidence" value="ECO:0007669"/>
    <property type="project" value="UniProtKB-UniRule"/>
</dbReference>
<dbReference type="GO" id="GO:0003921">
    <property type="term" value="F:GMP synthase activity"/>
    <property type="evidence" value="ECO:0007669"/>
    <property type="project" value="InterPro"/>
</dbReference>
<dbReference type="CDD" id="cd01742">
    <property type="entry name" value="GATase1_GMP_Synthase"/>
    <property type="match status" value="1"/>
</dbReference>
<dbReference type="CDD" id="cd01997">
    <property type="entry name" value="GMP_synthase_C"/>
    <property type="match status" value="1"/>
</dbReference>
<dbReference type="FunFam" id="3.30.300.10:FF:000002">
    <property type="entry name" value="GMP synthase [glutamine-hydrolyzing]"/>
    <property type="match status" value="1"/>
</dbReference>
<dbReference type="FunFam" id="3.40.50.620:FF:000001">
    <property type="entry name" value="GMP synthase [glutamine-hydrolyzing]"/>
    <property type="match status" value="1"/>
</dbReference>
<dbReference type="FunFam" id="3.40.50.880:FF:000001">
    <property type="entry name" value="GMP synthase [glutamine-hydrolyzing]"/>
    <property type="match status" value="1"/>
</dbReference>
<dbReference type="Gene3D" id="3.30.300.10">
    <property type="match status" value="1"/>
</dbReference>
<dbReference type="Gene3D" id="3.40.50.880">
    <property type="match status" value="1"/>
</dbReference>
<dbReference type="Gene3D" id="3.40.50.620">
    <property type="entry name" value="HUPs"/>
    <property type="match status" value="1"/>
</dbReference>
<dbReference type="HAMAP" id="MF_00344">
    <property type="entry name" value="GMP_synthase"/>
    <property type="match status" value="1"/>
</dbReference>
<dbReference type="InterPro" id="IPR029062">
    <property type="entry name" value="Class_I_gatase-like"/>
</dbReference>
<dbReference type="InterPro" id="IPR017926">
    <property type="entry name" value="GATASE"/>
</dbReference>
<dbReference type="InterPro" id="IPR001674">
    <property type="entry name" value="GMP_synth_C"/>
</dbReference>
<dbReference type="InterPro" id="IPR004739">
    <property type="entry name" value="GMP_synth_GATase"/>
</dbReference>
<dbReference type="InterPro" id="IPR022955">
    <property type="entry name" value="GMP_synthase"/>
</dbReference>
<dbReference type="InterPro" id="IPR025777">
    <property type="entry name" value="GMPS_ATP_PPase_dom"/>
</dbReference>
<dbReference type="InterPro" id="IPR022310">
    <property type="entry name" value="NAD/GMP_synthase"/>
</dbReference>
<dbReference type="InterPro" id="IPR014729">
    <property type="entry name" value="Rossmann-like_a/b/a_fold"/>
</dbReference>
<dbReference type="NCBIfam" id="TIGR00884">
    <property type="entry name" value="guaA_Cterm"/>
    <property type="match status" value="1"/>
</dbReference>
<dbReference type="NCBIfam" id="TIGR00888">
    <property type="entry name" value="guaA_Nterm"/>
    <property type="match status" value="1"/>
</dbReference>
<dbReference type="NCBIfam" id="NF000848">
    <property type="entry name" value="PRK00074.1"/>
    <property type="match status" value="1"/>
</dbReference>
<dbReference type="PANTHER" id="PTHR11922:SF2">
    <property type="entry name" value="GMP SYNTHASE [GLUTAMINE-HYDROLYZING]"/>
    <property type="match status" value="1"/>
</dbReference>
<dbReference type="PANTHER" id="PTHR11922">
    <property type="entry name" value="GMP SYNTHASE-RELATED"/>
    <property type="match status" value="1"/>
</dbReference>
<dbReference type="Pfam" id="PF00117">
    <property type="entry name" value="GATase"/>
    <property type="match status" value="1"/>
</dbReference>
<dbReference type="Pfam" id="PF00958">
    <property type="entry name" value="GMP_synt_C"/>
    <property type="match status" value="1"/>
</dbReference>
<dbReference type="Pfam" id="PF02540">
    <property type="entry name" value="NAD_synthase"/>
    <property type="match status" value="1"/>
</dbReference>
<dbReference type="PRINTS" id="PR00097">
    <property type="entry name" value="ANTSNTHASEII"/>
</dbReference>
<dbReference type="PRINTS" id="PR00099">
    <property type="entry name" value="CPSGATASE"/>
</dbReference>
<dbReference type="PRINTS" id="PR00096">
    <property type="entry name" value="GATASE"/>
</dbReference>
<dbReference type="SUPFAM" id="SSF52402">
    <property type="entry name" value="Adenine nucleotide alpha hydrolases-like"/>
    <property type="match status" value="1"/>
</dbReference>
<dbReference type="SUPFAM" id="SSF52317">
    <property type="entry name" value="Class I glutamine amidotransferase-like"/>
    <property type="match status" value="1"/>
</dbReference>
<dbReference type="SUPFAM" id="SSF54810">
    <property type="entry name" value="GMP synthetase C-terminal dimerisation domain"/>
    <property type="match status" value="1"/>
</dbReference>
<dbReference type="PROSITE" id="PS51273">
    <property type="entry name" value="GATASE_TYPE_1"/>
    <property type="match status" value="1"/>
</dbReference>
<dbReference type="PROSITE" id="PS51553">
    <property type="entry name" value="GMPS_ATP_PPASE"/>
    <property type="match status" value="1"/>
</dbReference>
<proteinExistence type="inferred from homology"/>
<name>GUAA_METFK</name>